<keyword id="KW-0963">Cytoplasm</keyword>
<keyword id="KW-0285">Flavoprotein</keyword>
<keyword id="KW-0288">FMN</keyword>
<keyword id="KW-0413">Isomerase</keyword>
<keyword id="KW-0414">Isoprene biosynthesis</keyword>
<keyword id="KW-0460">Magnesium</keyword>
<keyword id="KW-0479">Metal-binding</keyword>
<keyword id="KW-0521">NADP</keyword>
<gene>
    <name evidence="1" type="primary">fni</name>
    <name type="ordered locus">Mflv_4187</name>
</gene>
<sequence length="342" mass="35829">MTPDPASALQHRKRRHIDVCLTDPVDYQTLTTGFERYQLPYNALTQTDLHSVDLGTEFMGSRLRAPVLIGAMTGGAALSGIINRNLAEAAQQLGVGMMLGSQRVMIDDAVAAESFDVRGVAPDVLVIGNIGLAQLQPSMVPALAAALDRVGANGLAVHTNPLQEAMQHNGDTDFSGSMSRLREVVDSLGYPVMLKEVGHGIGASAAAQLVDCPVAAVDVAGAGGTSWARIEQFVRYGEVRYPALAEWGIPTAQALTEVRGILPDVPLVASGGIRTGMDAAKALAMGAEVVAIARPLLAPAVESVGAVVDWLQRFIDELLVCLHGSGAANLSALRERGVTELP</sequence>
<feature type="chain" id="PRO_1000079380" description="Isopentenyl-diphosphate delta-isomerase">
    <location>
        <begin position="1"/>
        <end position="342"/>
    </location>
</feature>
<feature type="binding site" evidence="1">
    <location>
        <begin position="12"/>
        <end position="13"/>
    </location>
    <ligand>
        <name>substrate</name>
    </ligand>
</feature>
<feature type="binding site" evidence="1">
    <location>
        <begin position="71"/>
        <end position="73"/>
    </location>
    <ligand>
        <name>FMN</name>
        <dbReference type="ChEBI" id="CHEBI:58210"/>
    </ligand>
</feature>
<feature type="binding site" evidence="1">
    <location>
        <begin position="101"/>
        <end position="103"/>
    </location>
    <ligand>
        <name>substrate</name>
    </ligand>
</feature>
<feature type="binding site" evidence="1">
    <location>
        <position position="101"/>
    </location>
    <ligand>
        <name>FMN</name>
        <dbReference type="ChEBI" id="CHEBI:58210"/>
    </ligand>
</feature>
<feature type="binding site" evidence="1">
    <location>
        <position position="129"/>
    </location>
    <ligand>
        <name>FMN</name>
        <dbReference type="ChEBI" id="CHEBI:58210"/>
    </ligand>
</feature>
<feature type="binding site" evidence="1">
    <location>
        <position position="163"/>
    </location>
    <ligand>
        <name>substrate</name>
    </ligand>
</feature>
<feature type="binding site" evidence="1">
    <location>
        <position position="164"/>
    </location>
    <ligand>
        <name>Mg(2+)</name>
        <dbReference type="ChEBI" id="CHEBI:18420"/>
    </ligand>
</feature>
<feature type="binding site" evidence="1">
    <location>
        <position position="195"/>
    </location>
    <ligand>
        <name>FMN</name>
        <dbReference type="ChEBI" id="CHEBI:58210"/>
    </ligand>
</feature>
<feature type="binding site" evidence="1">
    <location>
        <position position="225"/>
    </location>
    <ligand>
        <name>FMN</name>
        <dbReference type="ChEBI" id="CHEBI:58210"/>
    </ligand>
</feature>
<feature type="binding site" evidence="1">
    <location>
        <begin position="272"/>
        <end position="274"/>
    </location>
    <ligand>
        <name>FMN</name>
        <dbReference type="ChEBI" id="CHEBI:58210"/>
    </ligand>
</feature>
<feature type="binding site" evidence="1">
    <location>
        <begin position="293"/>
        <end position="294"/>
    </location>
    <ligand>
        <name>FMN</name>
        <dbReference type="ChEBI" id="CHEBI:58210"/>
    </ligand>
</feature>
<evidence type="ECO:0000255" key="1">
    <source>
        <dbReference type="HAMAP-Rule" id="MF_00354"/>
    </source>
</evidence>
<proteinExistence type="inferred from homology"/>
<organism>
    <name type="scientific">Mycolicibacterium gilvum (strain PYR-GCK)</name>
    <name type="common">Mycobacterium gilvum (strain PYR-GCK)</name>
    <dbReference type="NCBI Taxonomy" id="350054"/>
    <lineage>
        <taxon>Bacteria</taxon>
        <taxon>Bacillati</taxon>
        <taxon>Actinomycetota</taxon>
        <taxon>Actinomycetes</taxon>
        <taxon>Mycobacteriales</taxon>
        <taxon>Mycobacteriaceae</taxon>
        <taxon>Mycolicibacterium</taxon>
    </lineage>
</organism>
<accession>A4TE63</accession>
<reference key="1">
    <citation type="submission" date="2007-04" db="EMBL/GenBank/DDBJ databases">
        <title>Complete sequence of chromosome of Mycobacterium gilvum PYR-GCK.</title>
        <authorList>
            <consortium name="US DOE Joint Genome Institute"/>
            <person name="Copeland A."/>
            <person name="Lucas S."/>
            <person name="Lapidus A."/>
            <person name="Barry K."/>
            <person name="Detter J.C."/>
            <person name="Glavina del Rio T."/>
            <person name="Hammon N."/>
            <person name="Israni S."/>
            <person name="Dalin E."/>
            <person name="Tice H."/>
            <person name="Pitluck S."/>
            <person name="Chain P."/>
            <person name="Malfatti S."/>
            <person name="Shin M."/>
            <person name="Vergez L."/>
            <person name="Schmutz J."/>
            <person name="Larimer F."/>
            <person name="Land M."/>
            <person name="Hauser L."/>
            <person name="Kyrpides N."/>
            <person name="Mikhailova N."/>
            <person name="Miller C."/>
            <person name="Richardson P."/>
        </authorList>
    </citation>
    <scope>NUCLEOTIDE SEQUENCE [LARGE SCALE GENOMIC DNA]</scope>
    <source>
        <strain>PYR-GCK</strain>
    </source>
</reference>
<name>IDI2_MYCGI</name>
<dbReference type="EC" id="5.3.3.2" evidence="1"/>
<dbReference type="EMBL" id="CP000656">
    <property type="protein sequence ID" value="ABP46656.1"/>
    <property type="molecule type" value="Genomic_DNA"/>
</dbReference>
<dbReference type="SMR" id="A4TE63"/>
<dbReference type="STRING" id="350054.Mflv_4187"/>
<dbReference type="KEGG" id="mgi:Mflv_4187"/>
<dbReference type="eggNOG" id="COG1304">
    <property type="taxonomic scope" value="Bacteria"/>
</dbReference>
<dbReference type="HOGENOM" id="CLU_065515_1_0_11"/>
<dbReference type="OrthoDB" id="9795032at2"/>
<dbReference type="GO" id="GO:0005737">
    <property type="term" value="C:cytoplasm"/>
    <property type="evidence" value="ECO:0007669"/>
    <property type="project" value="UniProtKB-SubCell"/>
</dbReference>
<dbReference type="GO" id="GO:0010181">
    <property type="term" value="F:FMN binding"/>
    <property type="evidence" value="ECO:0007669"/>
    <property type="project" value="UniProtKB-UniRule"/>
</dbReference>
<dbReference type="GO" id="GO:0004452">
    <property type="term" value="F:isopentenyl-diphosphate delta-isomerase activity"/>
    <property type="evidence" value="ECO:0007669"/>
    <property type="project" value="UniProtKB-UniRule"/>
</dbReference>
<dbReference type="GO" id="GO:0000287">
    <property type="term" value="F:magnesium ion binding"/>
    <property type="evidence" value="ECO:0007669"/>
    <property type="project" value="UniProtKB-UniRule"/>
</dbReference>
<dbReference type="GO" id="GO:0070402">
    <property type="term" value="F:NADPH binding"/>
    <property type="evidence" value="ECO:0007669"/>
    <property type="project" value="UniProtKB-UniRule"/>
</dbReference>
<dbReference type="GO" id="GO:0016491">
    <property type="term" value="F:oxidoreductase activity"/>
    <property type="evidence" value="ECO:0007669"/>
    <property type="project" value="InterPro"/>
</dbReference>
<dbReference type="GO" id="GO:0008299">
    <property type="term" value="P:isoprenoid biosynthetic process"/>
    <property type="evidence" value="ECO:0007669"/>
    <property type="project" value="UniProtKB-UniRule"/>
</dbReference>
<dbReference type="CDD" id="cd02811">
    <property type="entry name" value="IDI-2_FMN"/>
    <property type="match status" value="1"/>
</dbReference>
<dbReference type="Gene3D" id="3.20.20.70">
    <property type="entry name" value="Aldolase class I"/>
    <property type="match status" value="1"/>
</dbReference>
<dbReference type="HAMAP" id="MF_00354">
    <property type="entry name" value="Idi_2"/>
    <property type="match status" value="1"/>
</dbReference>
<dbReference type="InterPro" id="IPR013785">
    <property type="entry name" value="Aldolase_TIM"/>
</dbReference>
<dbReference type="InterPro" id="IPR000262">
    <property type="entry name" value="FMN-dep_DH"/>
</dbReference>
<dbReference type="InterPro" id="IPR011179">
    <property type="entry name" value="IPdP_isomerase"/>
</dbReference>
<dbReference type="NCBIfam" id="TIGR02151">
    <property type="entry name" value="IPP_isom_2"/>
    <property type="match status" value="1"/>
</dbReference>
<dbReference type="PANTHER" id="PTHR43665">
    <property type="entry name" value="ISOPENTENYL-DIPHOSPHATE DELTA-ISOMERASE"/>
    <property type="match status" value="1"/>
</dbReference>
<dbReference type="PANTHER" id="PTHR43665:SF1">
    <property type="entry name" value="ISOPENTENYL-DIPHOSPHATE DELTA-ISOMERASE"/>
    <property type="match status" value="1"/>
</dbReference>
<dbReference type="Pfam" id="PF01070">
    <property type="entry name" value="FMN_dh"/>
    <property type="match status" value="2"/>
</dbReference>
<dbReference type="PIRSF" id="PIRSF003314">
    <property type="entry name" value="IPP_isomerase"/>
    <property type="match status" value="1"/>
</dbReference>
<dbReference type="SUPFAM" id="SSF51395">
    <property type="entry name" value="FMN-linked oxidoreductases"/>
    <property type="match status" value="1"/>
</dbReference>
<comment type="function">
    <text evidence="1">Involved in the biosynthesis of isoprenoids. Catalyzes the 1,3-allylic rearrangement of the homoallylic substrate isopentenyl (IPP) to its allylic isomer, dimethylallyl diphosphate (DMAPP).</text>
</comment>
<comment type="catalytic activity">
    <reaction evidence="1">
        <text>isopentenyl diphosphate = dimethylallyl diphosphate</text>
        <dbReference type="Rhea" id="RHEA:23284"/>
        <dbReference type="ChEBI" id="CHEBI:57623"/>
        <dbReference type="ChEBI" id="CHEBI:128769"/>
        <dbReference type="EC" id="5.3.3.2"/>
    </reaction>
</comment>
<comment type="cofactor">
    <cofactor evidence="1">
        <name>FMN</name>
        <dbReference type="ChEBI" id="CHEBI:58210"/>
    </cofactor>
</comment>
<comment type="cofactor">
    <cofactor evidence="1">
        <name>NADPH</name>
        <dbReference type="ChEBI" id="CHEBI:57783"/>
    </cofactor>
</comment>
<comment type="cofactor">
    <cofactor evidence="1">
        <name>Mg(2+)</name>
        <dbReference type="ChEBI" id="CHEBI:18420"/>
    </cofactor>
</comment>
<comment type="subunit">
    <text evidence="1">Homooctamer. Dimer of tetramers.</text>
</comment>
<comment type="subcellular location">
    <subcellularLocation>
        <location evidence="1">Cytoplasm</location>
    </subcellularLocation>
</comment>
<comment type="similarity">
    <text evidence="1">Belongs to the IPP isomerase type 2 family.</text>
</comment>
<protein>
    <recommendedName>
        <fullName evidence="1">Isopentenyl-diphosphate delta-isomerase</fullName>
        <shortName evidence="1">IPP isomerase</shortName>
        <ecNumber evidence="1">5.3.3.2</ecNumber>
    </recommendedName>
    <alternativeName>
        <fullName evidence="1">Isopentenyl diphosphate:dimethylallyl diphosphate isomerase</fullName>
    </alternativeName>
    <alternativeName>
        <fullName evidence="1">Isopentenyl pyrophosphate isomerase</fullName>
    </alternativeName>
    <alternativeName>
        <fullName evidence="1">Type 2 isopentenyl diphosphate isomerase</fullName>
        <shortName evidence="1">IDI-2</shortName>
    </alternativeName>
</protein>